<feature type="chain" id="PRO_0000238539" description="mRNA 3'-end-processing protein YTH1">
    <location>
        <begin position="1"/>
        <end position="255"/>
    </location>
</feature>
<feature type="zinc finger region" description="C3H1-type 1" evidence="2">
    <location>
        <begin position="37"/>
        <end position="64"/>
    </location>
</feature>
<feature type="zinc finger region" description="C3H1-type 2" evidence="2">
    <location>
        <begin position="73"/>
        <end position="100"/>
    </location>
</feature>
<feature type="zinc finger region" description="C3H1-type 3" evidence="2">
    <location>
        <begin position="101"/>
        <end position="129"/>
    </location>
</feature>
<feature type="zinc finger region" description="C3H1-type 4" evidence="2">
    <location>
        <begin position="130"/>
        <end position="157"/>
    </location>
</feature>
<feature type="zinc finger region" description="C3H1-type 5" evidence="2">
    <location>
        <begin position="159"/>
        <end position="182"/>
    </location>
</feature>
<feature type="region of interest" description="Disordered" evidence="3">
    <location>
        <begin position="179"/>
        <end position="255"/>
    </location>
</feature>
<feature type="compositionally biased region" description="Basic and acidic residues" evidence="3">
    <location>
        <begin position="179"/>
        <end position="227"/>
    </location>
</feature>
<feature type="compositionally biased region" description="Basic residues" evidence="3">
    <location>
        <begin position="238"/>
        <end position="255"/>
    </location>
</feature>
<organism>
    <name type="scientific">Gibberella zeae (strain ATCC MYA-4620 / CBS 123657 / FGSC 9075 / NRRL 31084 / PH-1)</name>
    <name type="common">Wheat head blight fungus</name>
    <name type="synonym">Fusarium graminearum</name>
    <dbReference type="NCBI Taxonomy" id="229533"/>
    <lineage>
        <taxon>Eukaryota</taxon>
        <taxon>Fungi</taxon>
        <taxon>Dikarya</taxon>
        <taxon>Ascomycota</taxon>
        <taxon>Pezizomycotina</taxon>
        <taxon>Sordariomycetes</taxon>
        <taxon>Hypocreomycetidae</taxon>
        <taxon>Hypocreales</taxon>
        <taxon>Nectriaceae</taxon>
        <taxon>Fusarium</taxon>
    </lineage>
</organism>
<protein>
    <recommendedName>
        <fullName>mRNA 3'-end-processing protein YTH1</fullName>
    </recommendedName>
</protein>
<proteinExistence type="inferred from homology"/>
<gene>
    <name type="primary">YTH1</name>
    <name type="ORF">FGRRES_11865</name>
    <name type="ORF">FGSG_11865</name>
</gene>
<sequence length="255" mass="29077">MPSAVESPADAILNHSATSYNFRFSPFLRQTYQVGLSPDRPVCKAFQSGHCPNGTRCPERHVSDSKTSQPTGGLNSLVCKHWLRGLCKKGEHCEFLHEYNLRKMPECNFFMRNGYCSNGDECLYLHIDPQSRLPPCPHYDMGFCPLGPNCSKKHVRRKLCVFYLAGFCPDGPDCKEGAHPKWSKDLEKPTLKSEEKKDEEMRVEFSQDDMDRQRDQQRDRDRDDGGRHRGGHGGHGGHGGRGKWRGRGRYRARGH</sequence>
<comment type="function">
    <text evidence="1">Component of the cleavage factor I (CF I) involved in pre-mRNA 3'-end processing.</text>
</comment>
<comment type="subcellular location">
    <subcellularLocation>
        <location evidence="1">Nucleus</location>
    </subcellularLocation>
</comment>
<comment type="similarity">
    <text evidence="4">Belongs to the CPSF4/YTH1 family.</text>
</comment>
<accession>Q4IPA4</accession>
<accession>A0A0E0RP28</accession>
<accession>I1S4U7</accession>
<accession>V6QVD7</accession>
<name>YTH1_GIBZE</name>
<reference key="1">
    <citation type="journal article" date="2007" name="Science">
        <title>The Fusarium graminearum genome reveals a link between localized polymorphism and pathogen specialization.</title>
        <authorList>
            <person name="Cuomo C.A."/>
            <person name="Gueldener U."/>
            <person name="Xu J.-R."/>
            <person name="Trail F."/>
            <person name="Turgeon B.G."/>
            <person name="Di Pietro A."/>
            <person name="Walton J.D."/>
            <person name="Ma L.-J."/>
            <person name="Baker S.E."/>
            <person name="Rep M."/>
            <person name="Adam G."/>
            <person name="Antoniw J."/>
            <person name="Baldwin T."/>
            <person name="Calvo S.E."/>
            <person name="Chang Y.-L."/>
            <person name="DeCaprio D."/>
            <person name="Gale L.R."/>
            <person name="Gnerre S."/>
            <person name="Goswami R.S."/>
            <person name="Hammond-Kosack K."/>
            <person name="Harris L.J."/>
            <person name="Hilburn K."/>
            <person name="Kennell J.C."/>
            <person name="Kroken S."/>
            <person name="Magnuson J.K."/>
            <person name="Mannhaupt G."/>
            <person name="Mauceli E.W."/>
            <person name="Mewes H.-W."/>
            <person name="Mitterbauer R."/>
            <person name="Muehlbauer G."/>
            <person name="Muensterkoetter M."/>
            <person name="Nelson D."/>
            <person name="O'Donnell K."/>
            <person name="Ouellet T."/>
            <person name="Qi W."/>
            <person name="Quesneville H."/>
            <person name="Roncero M.I.G."/>
            <person name="Seong K.-Y."/>
            <person name="Tetko I.V."/>
            <person name="Urban M."/>
            <person name="Waalwijk C."/>
            <person name="Ward T.J."/>
            <person name="Yao J."/>
            <person name="Birren B.W."/>
            <person name="Kistler H.C."/>
        </authorList>
    </citation>
    <scope>NUCLEOTIDE SEQUENCE [LARGE SCALE GENOMIC DNA]</scope>
    <source>
        <strain>ATCC MYA-4620 / CBS 123657 / FGSC 9075 / NRRL 31084 / PH-1</strain>
    </source>
</reference>
<reference key="2">
    <citation type="journal article" date="2010" name="Nature">
        <title>Comparative genomics reveals mobile pathogenicity chromosomes in Fusarium.</title>
        <authorList>
            <person name="Ma L.-J."/>
            <person name="van der Does H.C."/>
            <person name="Borkovich K.A."/>
            <person name="Coleman J.J."/>
            <person name="Daboussi M.-J."/>
            <person name="Di Pietro A."/>
            <person name="Dufresne M."/>
            <person name="Freitag M."/>
            <person name="Grabherr M."/>
            <person name="Henrissat B."/>
            <person name="Houterman P.M."/>
            <person name="Kang S."/>
            <person name="Shim W.-B."/>
            <person name="Woloshuk C."/>
            <person name="Xie X."/>
            <person name="Xu J.-R."/>
            <person name="Antoniw J."/>
            <person name="Baker S.E."/>
            <person name="Bluhm B.H."/>
            <person name="Breakspear A."/>
            <person name="Brown D.W."/>
            <person name="Butchko R.A.E."/>
            <person name="Chapman S."/>
            <person name="Coulson R."/>
            <person name="Coutinho P.M."/>
            <person name="Danchin E.G.J."/>
            <person name="Diener A."/>
            <person name="Gale L.R."/>
            <person name="Gardiner D.M."/>
            <person name="Goff S."/>
            <person name="Hammond-Kosack K.E."/>
            <person name="Hilburn K."/>
            <person name="Hua-Van A."/>
            <person name="Jonkers W."/>
            <person name="Kazan K."/>
            <person name="Kodira C.D."/>
            <person name="Koehrsen M."/>
            <person name="Kumar L."/>
            <person name="Lee Y.-H."/>
            <person name="Li L."/>
            <person name="Manners J.M."/>
            <person name="Miranda-Saavedra D."/>
            <person name="Mukherjee M."/>
            <person name="Park G."/>
            <person name="Park J."/>
            <person name="Park S.-Y."/>
            <person name="Proctor R.H."/>
            <person name="Regev A."/>
            <person name="Ruiz-Roldan M.C."/>
            <person name="Sain D."/>
            <person name="Sakthikumar S."/>
            <person name="Sykes S."/>
            <person name="Schwartz D.C."/>
            <person name="Turgeon B.G."/>
            <person name="Wapinski I."/>
            <person name="Yoder O."/>
            <person name="Young S."/>
            <person name="Zeng Q."/>
            <person name="Zhou S."/>
            <person name="Galagan J."/>
            <person name="Cuomo C.A."/>
            <person name="Kistler H.C."/>
            <person name="Rep M."/>
        </authorList>
    </citation>
    <scope>GENOME REANNOTATION</scope>
    <source>
        <strain>ATCC MYA-4620 / CBS 123657 / FGSC 9075 / NRRL 31084 / PH-1</strain>
    </source>
</reference>
<reference key="3">
    <citation type="journal article" date="2015" name="BMC Genomics">
        <title>The completed genome sequence of the pathogenic ascomycete fungus Fusarium graminearum.</title>
        <authorList>
            <person name="King R."/>
            <person name="Urban M."/>
            <person name="Hammond-Kosack M.C.U."/>
            <person name="Hassani-Pak K."/>
            <person name="Hammond-Kosack K.E."/>
        </authorList>
    </citation>
    <scope>NUCLEOTIDE SEQUENCE [LARGE SCALE GENOMIC DNA]</scope>
    <source>
        <strain>ATCC MYA-4620 / CBS 123657 / FGSC 9075 / NRRL 31084 / PH-1</strain>
    </source>
</reference>
<dbReference type="EMBL" id="DS231663">
    <property type="protein sequence ID" value="ESU06211.1"/>
    <property type="molecule type" value="Genomic_DNA"/>
</dbReference>
<dbReference type="EMBL" id="HG970332">
    <property type="protein sequence ID" value="CEF73003.1"/>
    <property type="molecule type" value="Genomic_DNA"/>
</dbReference>
<dbReference type="RefSeq" id="XP_011316696.1">
    <property type="nucleotide sequence ID" value="XM_011318394.1"/>
</dbReference>
<dbReference type="SMR" id="Q4IPA4"/>
<dbReference type="FunCoup" id="Q4IPA4">
    <property type="interactions" value="77"/>
</dbReference>
<dbReference type="STRING" id="229533.Q4IPA4"/>
<dbReference type="GeneID" id="23558684"/>
<dbReference type="KEGG" id="fgr:FGSG_11865"/>
<dbReference type="VEuPathDB" id="FungiDB:FGRAMPH1_01G02405"/>
<dbReference type="eggNOG" id="KOG1040">
    <property type="taxonomic scope" value="Eukaryota"/>
</dbReference>
<dbReference type="HOGENOM" id="CLU_024513_1_1_1"/>
<dbReference type="InParanoid" id="Q4IPA4"/>
<dbReference type="OrthoDB" id="83589at110618"/>
<dbReference type="Proteomes" id="UP000070720">
    <property type="component" value="Chromosome 1"/>
</dbReference>
<dbReference type="GO" id="GO:0005634">
    <property type="term" value="C:nucleus"/>
    <property type="evidence" value="ECO:0007669"/>
    <property type="project" value="UniProtKB-SubCell"/>
</dbReference>
<dbReference type="GO" id="GO:0003723">
    <property type="term" value="F:RNA binding"/>
    <property type="evidence" value="ECO:0007669"/>
    <property type="project" value="UniProtKB-KW"/>
</dbReference>
<dbReference type="GO" id="GO:0008270">
    <property type="term" value="F:zinc ion binding"/>
    <property type="evidence" value="ECO:0007669"/>
    <property type="project" value="UniProtKB-KW"/>
</dbReference>
<dbReference type="GO" id="GO:0006397">
    <property type="term" value="P:mRNA processing"/>
    <property type="evidence" value="ECO:0007669"/>
    <property type="project" value="UniProtKB-KW"/>
</dbReference>
<dbReference type="FunFam" id="4.10.1000.10:FF:000012">
    <property type="entry name" value="cleavage and polyadenylation specificity factor subunit 4"/>
    <property type="match status" value="1"/>
</dbReference>
<dbReference type="Gene3D" id="4.10.1000.10">
    <property type="entry name" value="Zinc finger, CCCH-type"/>
    <property type="match status" value="2"/>
</dbReference>
<dbReference type="InterPro" id="IPR045348">
    <property type="entry name" value="CPSF4/Yth1"/>
</dbReference>
<dbReference type="InterPro" id="IPR000571">
    <property type="entry name" value="Znf_CCCH"/>
</dbReference>
<dbReference type="InterPro" id="IPR036855">
    <property type="entry name" value="Znf_CCCH_sf"/>
</dbReference>
<dbReference type="PANTHER" id="PTHR23102:SF24">
    <property type="entry name" value="CLEAVAGE AND POLYADENYLATION SPECIFICITY FACTOR SUBUNIT 4"/>
    <property type="match status" value="1"/>
</dbReference>
<dbReference type="PANTHER" id="PTHR23102">
    <property type="entry name" value="CLEAVAGE AND POLYADENYLATION SPECIFICITY FACTOR SUBUNIT 4-RELATED"/>
    <property type="match status" value="1"/>
</dbReference>
<dbReference type="Pfam" id="PF00642">
    <property type="entry name" value="zf-CCCH"/>
    <property type="match status" value="2"/>
</dbReference>
<dbReference type="Pfam" id="PF14608">
    <property type="entry name" value="zf-CCCH_2"/>
    <property type="match status" value="3"/>
</dbReference>
<dbReference type="SMART" id="SM00356">
    <property type="entry name" value="ZnF_C3H1"/>
    <property type="match status" value="5"/>
</dbReference>
<dbReference type="SUPFAM" id="SSF90229">
    <property type="entry name" value="CCCH zinc finger"/>
    <property type="match status" value="2"/>
</dbReference>
<dbReference type="PROSITE" id="PS50103">
    <property type="entry name" value="ZF_C3H1"/>
    <property type="match status" value="5"/>
</dbReference>
<evidence type="ECO:0000250" key="1"/>
<evidence type="ECO:0000255" key="2">
    <source>
        <dbReference type="PROSITE-ProRule" id="PRU00723"/>
    </source>
</evidence>
<evidence type="ECO:0000256" key="3">
    <source>
        <dbReference type="SAM" id="MobiDB-lite"/>
    </source>
</evidence>
<evidence type="ECO:0000305" key="4"/>
<keyword id="KW-0479">Metal-binding</keyword>
<keyword id="KW-0507">mRNA processing</keyword>
<keyword id="KW-0539">Nucleus</keyword>
<keyword id="KW-1185">Reference proteome</keyword>
<keyword id="KW-0677">Repeat</keyword>
<keyword id="KW-0694">RNA-binding</keyword>
<keyword id="KW-0862">Zinc</keyword>
<keyword id="KW-0863">Zinc-finger</keyword>